<organism>
    <name type="scientific">Streptomyces coelicolor (strain ATCC BAA-471 / A3(2) / M145)</name>
    <dbReference type="NCBI Taxonomy" id="100226"/>
    <lineage>
        <taxon>Bacteria</taxon>
        <taxon>Bacillati</taxon>
        <taxon>Actinomycetota</taxon>
        <taxon>Actinomycetes</taxon>
        <taxon>Kitasatosporales</taxon>
        <taxon>Streptomycetaceae</taxon>
        <taxon>Streptomyces</taxon>
        <taxon>Streptomyces albidoflavus group</taxon>
    </lineage>
</organism>
<accession>Q9S2A5</accession>
<feature type="signal peptide" evidence="2">
    <location>
        <begin position="1"/>
        <end position="29"/>
    </location>
</feature>
<feature type="chain" id="PRO_0000407311" description="Lipase 1">
    <location>
        <begin position="30"/>
        <end position="268"/>
    </location>
</feature>
<feature type="active site" description="Nucleophile" evidence="1">
    <location>
        <position position="44"/>
    </location>
</feature>
<feature type="active site" evidence="1">
    <location>
        <position position="250"/>
    </location>
</feature>
<feature type="disulfide bond" evidence="1">
    <location>
        <begin position="61"/>
        <end position="86"/>
    </location>
</feature>
<feature type="disulfide bond" evidence="1">
    <location>
        <begin position="127"/>
        <end position="135"/>
    </location>
</feature>
<feature type="disulfide bond" evidence="1">
    <location>
        <begin position="185"/>
        <end position="231"/>
    </location>
</feature>
<protein>
    <recommendedName>
        <fullName>Lipase 1</fullName>
        <ecNumber>3.1.1.3</ecNumber>
    </recommendedName>
    <alternativeName>
        <fullName>Arylesterase</fullName>
        <ecNumber>3.1.1.-</ecNumber>
    </alternativeName>
</protein>
<proteinExistence type="evidence at protein level"/>
<gene>
    <name type="ordered locus">SCO1725</name>
    <name type="ORF">SCI11.14c</name>
</gene>
<dbReference type="EC" id="3.1.1.3"/>
<dbReference type="EC" id="3.1.1.-"/>
<dbReference type="EMBL" id="AL939110">
    <property type="protein sequence ID" value="CAB50940.1"/>
    <property type="molecule type" value="Genomic_DNA"/>
</dbReference>
<dbReference type="PIR" id="T36747">
    <property type="entry name" value="T36747"/>
</dbReference>
<dbReference type="RefSeq" id="NP_625998.1">
    <property type="nucleotide sequence ID" value="NC_003888.3"/>
</dbReference>
<dbReference type="RefSeq" id="WP_003977101.1">
    <property type="nucleotide sequence ID" value="NZ_VNID01000018.1"/>
</dbReference>
<dbReference type="SMR" id="Q9S2A5"/>
<dbReference type="STRING" id="100226.gene:17759319"/>
<dbReference type="PaxDb" id="100226-SCO1725"/>
<dbReference type="KEGG" id="sco:SCO1725"/>
<dbReference type="PATRIC" id="fig|100226.15.peg.1742"/>
<dbReference type="eggNOG" id="COG2755">
    <property type="taxonomic scope" value="Bacteria"/>
</dbReference>
<dbReference type="HOGENOM" id="CLU_038449_3_0_11"/>
<dbReference type="InParanoid" id="Q9S2A5"/>
<dbReference type="OrthoDB" id="5503950at2"/>
<dbReference type="PhylomeDB" id="Q9S2A5"/>
<dbReference type="BRENDA" id="3.1.1.3">
    <property type="organism ID" value="5998"/>
</dbReference>
<dbReference type="Proteomes" id="UP000001973">
    <property type="component" value="Chromosome"/>
</dbReference>
<dbReference type="GO" id="GO:0005576">
    <property type="term" value="C:extracellular region"/>
    <property type="evidence" value="ECO:0000314"/>
    <property type="project" value="UniProtKB"/>
</dbReference>
<dbReference type="GO" id="GO:0106435">
    <property type="term" value="F:carboxylesterase activity"/>
    <property type="evidence" value="ECO:0000314"/>
    <property type="project" value="UniProtKB"/>
</dbReference>
<dbReference type="GO" id="GO:0004806">
    <property type="term" value="F:triacylglycerol lipase activity"/>
    <property type="evidence" value="ECO:0000314"/>
    <property type="project" value="UniProtKB"/>
</dbReference>
<dbReference type="GO" id="GO:0019433">
    <property type="term" value="P:triglyceride catabolic process"/>
    <property type="evidence" value="ECO:0000314"/>
    <property type="project" value="UniProtKB"/>
</dbReference>
<dbReference type="CDD" id="cd01823">
    <property type="entry name" value="SEST_like"/>
    <property type="match status" value="1"/>
</dbReference>
<dbReference type="FunFam" id="3.40.50.1110:FF:000018">
    <property type="entry name" value="Lipase 1"/>
    <property type="match status" value="1"/>
</dbReference>
<dbReference type="Gene3D" id="3.40.50.1110">
    <property type="entry name" value="SGNH hydrolase"/>
    <property type="match status" value="1"/>
</dbReference>
<dbReference type="InterPro" id="IPR037460">
    <property type="entry name" value="SEST-like"/>
</dbReference>
<dbReference type="InterPro" id="IPR013830">
    <property type="entry name" value="SGNH_hydro"/>
</dbReference>
<dbReference type="InterPro" id="IPR036514">
    <property type="entry name" value="SGNH_hydro_sf"/>
</dbReference>
<dbReference type="PANTHER" id="PTHR37981">
    <property type="entry name" value="LIPASE 2"/>
    <property type="match status" value="1"/>
</dbReference>
<dbReference type="PANTHER" id="PTHR37981:SF1">
    <property type="entry name" value="SGNH HYDROLASE-TYPE ESTERASE DOMAIN-CONTAINING PROTEIN"/>
    <property type="match status" value="1"/>
</dbReference>
<dbReference type="Pfam" id="PF13472">
    <property type="entry name" value="Lipase_GDSL_2"/>
    <property type="match status" value="1"/>
</dbReference>
<dbReference type="SUPFAM" id="SSF52266">
    <property type="entry name" value="SGNH hydrolase"/>
    <property type="match status" value="1"/>
</dbReference>
<name>LIP1_STRCO</name>
<reference key="1">
    <citation type="journal article" date="2002" name="Nature">
        <title>Complete genome sequence of the model actinomycete Streptomyces coelicolor A3(2).</title>
        <authorList>
            <person name="Bentley S.D."/>
            <person name="Chater K.F."/>
            <person name="Cerdeno-Tarraga A.-M."/>
            <person name="Challis G.L."/>
            <person name="Thomson N.R."/>
            <person name="James K.D."/>
            <person name="Harris D.E."/>
            <person name="Quail M.A."/>
            <person name="Kieser H."/>
            <person name="Harper D."/>
            <person name="Bateman A."/>
            <person name="Brown S."/>
            <person name="Chandra G."/>
            <person name="Chen C.W."/>
            <person name="Collins M."/>
            <person name="Cronin A."/>
            <person name="Fraser A."/>
            <person name="Goble A."/>
            <person name="Hidalgo J."/>
            <person name="Hornsby T."/>
            <person name="Howarth S."/>
            <person name="Huang C.-H."/>
            <person name="Kieser T."/>
            <person name="Larke L."/>
            <person name="Murphy L.D."/>
            <person name="Oliver K."/>
            <person name="O'Neil S."/>
            <person name="Rabbinowitsch E."/>
            <person name="Rajandream M.A."/>
            <person name="Rutherford K.M."/>
            <person name="Rutter S."/>
            <person name="Seeger K."/>
            <person name="Saunders D."/>
            <person name="Sharp S."/>
            <person name="Squares R."/>
            <person name="Squares S."/>
            <person name="Taylor K."/>
            <person name="Warren T."/>
            <person name="Wietzorrek A."/>
            <person name="Woodward J.R."/>
            <person name="Barrell B.G."/>
            <person name="Parkhill J."/>
            <person name="Hopwood D.A."/>
        </authorList>
    </citation>
    <scope>NUCLEOTIDE SEQUENCE [LARGE SCALE GENOMIC DNA]</scope>
    <source>
        <strain>ATCC BAA-471 / A3(2) / M145</strain>
    </source>
</reference>
<reference key="2">
    <citation type="journal article" date="2008" name="Enzyme Microb. Technol.">
        <title>Cloning, purification and characterization of two lipases from Streptomyces coelicolor A3(2).</title>
        <authorList>
            <person name="Cote A."/>
            <person name="Shareck F."/>
        </authorList>
    </citation>
    <scope>FUNCTION</scope>
    <scope>SUBSTRATE SPECIFICITY</scope>
    <scope>BIOPHYSICOCHEMICAL PROPERTIES</scope>
    <scope>ACTIVITY REGULATION</scope>
    <scope>SUBCELLULAR LOCATION</scope>
    <source>
        <strain>ATCC BAA-471 / A3(2) / M145</strain>
    </source>
</reference>
<reference key="3">
    <citation type="journal article" date="2009" name="Biochimie">
        <title>The SGNH-hydrolase of Streptomyces coelicolor has (aryl)esterase and a true lipase activity.</title>
        <authorList>
            <person name="Bielen A."/>
            <person name="Cetkovic H."/>
            <person name="Long P.F."/>
            <person name="Schwab H."/>
            <person name="Abramic M."/>
            <person name="Vujaklija D."/>
        </authorList>
    </citation>
    <scope>FUNCTION</scope>
    <scope>CATALYTIC ACTIVITY</scope>
    <scope>SUBSTRATE SPECIFICITY</scope>
    <scope>BIOPHYSICOCHEMICAL PROPERTIES</scope>
    <scope>ACTIVITY REGULATION</scope>
    <scope>SUBUNIT</scope>
    <scope>SUBCELLULAR LOCATION</scope>
</reference>
<sequence length="268" mass="27394">MRRFRLVGFLSSLVLAAGAALTGAATAQAAQPAAADGYVALGDSYSSGVGAGSYISSSGDCKRSTKAHPYLWAAAHSPSTFDFTACSGARTGDVLSGQLGPLSSGTGLVSISIGGNDAGFADTMTTCVLQSESSCLSRIATAEAYVDSTLPGKLDGVYSAISDKAPNAHVVVIGYPRFYKLGTTCIGLSETKRTAINKASDHLNTVLAQRAAAHGFTFGDVRTTFTGHELCSGSPWLHSVNWLNIGESYHPTAAGQSGGYLPVLNGAA</sequence>
<comment type="function">
    <text evidence="3 4">Catalyzes the hydrolysis of fatty acid esters with a preference for mid-length acyl chain (C10-C16). Is able to hydrolyze the triacylglycerol triolein and mixed triacylglycerols from a wide range of natural oils; better activity is obtained with corn-, wheat germ- and olive oil that have higher content of linoleic and/or oleic acid (C18:2; C18:1, cis). Tween detergents are also substrates for this enzyme. Displays arylesterase activity towards p-nitrophenyl alkanoate esters and alpha- and beta-naphthyl esters.</text>
</comment>
<comment type="catalytic activity">
    <reaction evidence="3">
        <text>a triacylglycerol + H2O = a diacylglycerol + a fatty acid + H(+)</text>
        <dbReference type="Rhea" id="RHEA:12044"/>
        <dbReference type="ChEBI" id="CHEBI:15377"/>
        <dbReference type="ChEBI" id="CHEBI:15378"/>
        <dbReference type="ChEBI" id="CHEBI:17855"/>
        <dbReference type="ChEBI" id="CHEBI:18035"/>
        <dbReference type="ChEBI" id="CHEBI:28868"/>
        <dbReference type="EC" id="3.1.1.3"/>
    </reaction>
</comment>
<comment type="activity regulation">
    <text evidence="3 4">Strongly inhibited by Ag(+). The cations Ca(2+), Mg(2+), Co(2+) and Cu(2+) do not significantly reduce the lipolytic activity of SCO1725. Is also inhibited by DTT in vitro, but not by EDTA or by the reagent masking SH-groups, p-hydroxymercuribenzoate (pHMB). Is resistant to PMSF inhibition, except in the presence of Ca(2+). Is also strongly inhibited by 3,4-dichloroisocoumarin (DCI), another inhibitor of serine hydrolases. Addition of tetrahydrofuran and 1,4-dioxane significantly increases (2- and 4- fold, respectively) hydrolytic activity of lipase towards p-nitrophenyl caprylate.</text>
</comment>
<comment type="biophysicochemical properties">
    <phDependence>
        <text evidence="3 4">Optimum pH is 8.5. Shows high stability over a broad range of pH 4-9.5 (80-100% of enzyme activity). Becomes unstable at pH over 10, where the activity drops to 34% at pH 10.5 and to 8% at pH 11.</text>
    </phDependence>
    <temperatureDependence>
        <text evidence="3 4">Optimum temperature is 20-30 degrees Celsius (DOI=10.1016/j.enzmictec.2008.01.009). The His-tagged protein shows a higher optimum temperature of 55 degrees Celsius, and a thermal denaturation midpoint (Tm) of 66.63 degrees Celsius (PubMed:19041687). Is stable when incubated for 30 minutes at temperatures in the range of 30-70 degrees Celsius at pH 7 (DOI=10.1016/j.enzmictec.2008.01.009).</text>
    </temperatureDependence>
</comment>
<comment type="subunit">
    <text evidence="3">Monomer.</text>
</comment>
<comment type="subcellular location">
    <subcellularLocation>
        <location evidence="3 4">Secreted</location>
    </subcellularLocation>
</comment>
<comment type="similarity">
    <text evidence="5">Belongs to the 'GDSL' lipolytic enzyme family.</text>
</comment>
<evidence type="ECO:0000250" key="1"/>
<evidence type="ECO:0000255" key="2"/>
<evidence type="ECO:0000269" key="3">
    <source>
    </source>
</evidence>
<evidence type="ECO:0000269" key="4">
    <source ref="2"/>
</evidence>
<evidence type="ECO:0000305" key="5"/>
<keyword id="KW-1015">Disulfide bond</keyword>
<keyword id="KW-0378">Hydrolase</keyword>
<keyword id="KW-0442">Lipid degradation</keyword>
<keyword id="KW-0443">Lipid metabolism</keyword>
<keyword id="KW-1185">Reference proteome</keyword>
<keyword id="KW-0964">Secreted</keyword>
<keyword id="KW-0719">Serine esterase</keyword>
<keyword id="KW-0732">Signal</keyword>